<dbReference type="EMBL" id="CP000911">
    <property type="protein sequence ID" value="ABY37423.1"/>
    <property type="molecule type" value="Genomic_DNA"/>
</dbReference>
<dbReference type="RefSeq" id="WP_004689461.1">
    <property type="nucleotide sequence ID" value="NC_010169.1"/>
</dbReference>
<dbReference type="SMR" id="B0CJT2"/>
<dbReference type="GeneID" id="97534304"/>
<dbReference type="KEGG" id="bmt:BSUIS_A0330"/>
<dbReference type="HOGENOM" id="CLU_128074_1_0_5"/>
<dbReference type="Proteomes" id="UP000008545">
    <property type="component" value="Chromosome I"/>
</dbReference>
<dbReference type="GO" id="GO:0070987">
    <property type="term" value="P:error-free translesion synthesis"/>
    <property type="evidence" value="ECO:0007669"/>
    <property type="project" value="TreeGrafter"/>
</dbReference>
<dbReference type="Gene3D" id="2.60.40.1470">
    <property type="entry name" value="ApaG domain"/>
    <property type="match status" value="1"/>
</dbReference>
<dbReference type="HAMAP" id="MF_00791">
    <property type="entry name" value="ApaG"/>
    <property type="match status" value="1"/>
</dbReference>
<dbReference type="InterPro" id="IPR007474">
    <property type="entry name" value="ApaG_domain"/>
</dbReference>
<dbReference type="InterPro" id="IPR036767">
    <property type="entry name" value="ApaG_sf"/>
</dbReference>
<dbReference type="InterPro" id="IPR023065">
    <property type="entry name" value="Uncharacterised_ApaG"/>
</dbReference>
<dbReference type="NCBIfam" id="NF003967">
    <property type="entry name" value="PRK05461.1"/>
    <property type="match status" value="1"/>
</dbReference>
<dbReference type="PANTHER" id="PTHR14289">
    <property type="entry name" value="F-BOX ONLY PROTEIN 3"/>
    <property type="match status" value="1"/>
</dbReference>
<dbReference type="PANTHER" id="PTHR14289:SF16">
    <property type="entry name" value="POLYMERASE DELTA-INTERACTING PROTEIN 2"/>
    <property type="match status" value="1"/>
</dbReference>
<dbReference type="Pfam" id="PF04379">
    <property type="entry name" value="DUF525"/>
    <property type="match status" value="1"/>
</dbReference>
<dbReference type="SUPFAM" id="SSF110069">
    <property type="entry name" value="ApaG-like"/>
    <property type="match status" value="1"/>
</dbReference>
<dbReference type="PROSITE" id="PS51087">
    <property type="entry name" value="APAG"/>
    <property type="match status" value="1"/>
</dbReference>
<sequence>MYSAVTRGIEVTVEPFYLEVQSEPEENRYVWGYRVTIVNNSSETVQLCSRYWQITDANGHVQEVRGSGVVGEQPVLDPGDSYQYSSGCPLTTSSGVMVGRYQMKGEDGAQFEIEIPAFSLDVPEQRRTLN</sequence>
<reference key="1">
    <citation type="submission" date="2007-12" db="EMBL/GenBank/DDBJ databases">
        <title>Brucella suis ATCC 23445 whole genome shotgun sequencing project.</title>
        <authorList>
            <person name="Setubal J.C."/>
            <person name="Bowns C."/>
            <person name="Boyle S."/>
            <person name="Crasta O.R."/>
            <person name="Czar M.J."/>
            <person name="Dharmanolla C."/>
            <person name="Gillespie J.J."/>
            <person name="Kenyon R.W."/>
            <person name="Lu J."/>
            <person name="Mane S."/>
            <person name="Mohapatra S."/>
            <person name="Nagrani S."/>
            <person name="Purkayastha A."/>
            <person name="Rajasimha H.K."/>
            <person name="Shallom J.M."/>
            <person name="Shallom S."/>
            <person name="Shukla M."/>
            <person name="Snyder E.E."/>
            <person name="Sobral B.W."/>
            <person name="Wattam A.R."/>
            <person name="Will R."/>
            <person name="Williams K."/>
            <person name="Yoo H."/>
            <person name="Bruce D."/>
            <person name="Detter C."/>
            <person name="Munk C."/>
            <person name="Brettin T.S."/>
        </authorList>
    </citation>
    <scope>NUCLEOTIDE SEQUENCE [LARGE SCALE GENOMIC DNA]</scope>
    <source>
        <strain>ATCC 23445 / NCTC 10510</strain>
    </source>
</reference>
<organism>
    <name type="scientific">Brucella suis (strain ATCC 23445 / NCTC 10510)</name>
    <dbReference type="NCBI Taxonomy" id="470137"/>
    <lineage>
        <taxon>Bacteria</taxon>
        <taxon>Pseudomonadati</taxon>
        <taxon>Pseudomonadota</taxon>
        <taxon>Alphaproteobacteria</taxon>
        <taxon>Hyphomicrobiales</taxon>
        <taxon>Brucellaceae</taxon>
        <taxon>Brucella/Ochrobactrum group</taxon>
        <taxon>Brucella</taxon>
    </lineage>
</organism>
<name>APAG_BRUSI</name>
<accession>B0CJT2</accession>
<evidence type="ECO:0000255" key="1">
    <source>
        <dbReference type="HAMAP-Rule" id="MF_00791"/>
    </source>
</evidence>
<feature type="chain" id="PRO_1000083612" description="Protein ApaG">
    <location>
        <begin position="1"/>
        <end position="130"/>
    </location>
</feature>
<feature type="domain" description="ApaG" evidence="1">
    <location>
        <begin position="3"/>
        <end position="127"/>
    </location>
</feature>
<protein>
    <recommendedName>
        <fullName evidence="1">Protein ApaG</fullName>
    </recommendedName>
</protein>
<proteinExistence type="inferred from homology"/>
<gene>
    <name evidence="1" type="primary">apaG</name>
    <name type="ordered locus">BSUIS_A0330</name>
</gene>